<comment type="function">
    <text evidence="1">Catalyzes the transfer of the cytidylyl group of CTP to D-ribitol 5-phosphate.</text>
</comment>
<comment type="catalytic activity">
    <reaction evidence="1">
        <text>D-ribitol 5-phosphate + CTP + H(+) = CDP-L-ribitol + diphosphate</text>
        <dbReference type="Rhea" id="RHEA:12456"/>
        <dbReference type="ChEBI" id="CHEBI:15378"/>
        <dbReference type="ChEBI" id="CHEBI:33019"/>
        <dbReference type="ChEBI" id="CHEBI:37563"/>
        <dbReference type="ChEBI" id="CHEBI:57608"/>
        <dbReference type="ChEBI" id="CHEBI:57695"/>
        <dbReference type="EC" id="2.7.7.40"/>
    </reaction>
</comment>
<comment type="pathway">
    <text evidence="1">Cell wall biogenesis; poly(ribitol phosphate) teichoic acid biosynthesis.</text>
</comment>
<comment type="similarity">
    <text evidence="1">Belongs to the IspD/TarI cytidylyltransferase family. TarI subfamily.</text>
</comment>
<keyword id="KW-0961">Cell wall biogenesis/degradation</keyword>
<keyword id="KW-0548">Nucleotidyltransferase</keyword>
<keyword id="KW-1185">Reference proteome</keyword>
<keyword id="KW-0777">Teichoic acid biosynthesis</keyword>
<keyword id="KW-0808">Transferase</keyword>
<protein>
    <recommendedName>
        <fullName evidence="1">Ribitol-5-phosphate cytidylyltransferase</fullName>
        <ecNumber evidence="1">2.7.7.40</ecNumber>
    </recommendedName>
</protein>
<gene>
    <name evidence="1" type="primary">tarI</name>
    <name type="ordered locus">SSP0354</name>
</gene>
<accession>Q4A0A8</accession>
<sequence>MIYAGILAGGIGSRMGNVPLPKQFLDLDGKPILVHTVEKFLLTSEFDKIFIATPQKWISHTKDTLRKHHITDDRIEVVQGGSDRNETIMNIISAAEKENGISDDDVIITHDAVRPFLTRRIIKENIESVLKYGAVDTVITATDTIITSADGDSIQSIPVRSEMYQGQTPQSFNVNLLRNSYNDLSDEDKQIMTDACKILVVAGKQVKLVMGELYNIKITTPYDLKVANSIIKGGMLSD</sequence>
<proteinExistence type="inferred from homology"/>
<name>TARI_STAS1</name>
<organism>
    <name type="scientific">Staphylococcus saprophyticus subsp. saprophyticus (strain ATCC 15305 / DSM 20229 / NCIMB 8711 / NCTC 7292 / S-41)</name>
    <dbReference type="NCBI Taxonomy" id="342451"/>
    <lineage>
        <taxon>Bacteria</taxon>
        <taxon>Bacillati</taxon>
        <taxon>Bacillota</taxon>
        <taxon>Bacilli</taxon>
        <taxon>Bacillales</taxon>
        <taxon>Staphylococcaceae</taxon>
        <taxon>Staphylococcus</taxon>
    </lineage>
</organism>
<dbReference type="EC" id="2.7.7.40" evidence="1"/>
<dbReference type="EMBL" id="AP008934">
    <property type="protein sequence ID" value="BAE17499.1"/>
    <property type="molecule type" value="Genomic_DNA"/>
</dbReference>
<dbReference type="RefSeq" id="WP_011302331.1">
    <property type="nucleotide sequence ID" value="NZ_MTGA01000030.1"/>
</dbReference>
<dbReference type="SMR" id="Q4A0A8"/>
<dbReference type="KEGG" id="ssp:SSP0354"/>
<dbReference type="PATRIC" id="fig|342451.11.peg.358"/>
<dbReference type="eggNOG" id="COG1211">
    <property type="taxonomic scope" value="Bacteria"/>
</dbReference>
<dbReference type="HOGENOM" id="CLU_061281_2_3_9"/>
<dbReference type="OrthoDB" id="9806837at2"/>
<dbReference type="UniPathway" id="UPA00790"/>
<dbReference type="Proteomes" id="UP000006371">
    <property type="component" value="Chromosome"/>
</dbReference>
<dbReference type="GO" id="GO:0050518">
    <property type="term" value="F:2-C-methyl-D-erythritol 4-phosphate cytidylyltransferase activity"/>
    <property type="evidence" value="ECO:0007669"/>
    <property type="project" value="TreeGrafter"/>
</dbReference>
<dbReference type="GO" id="GO:0047349">
    <property type="term" value="F:D-ribitol-5-phosphate cytidylyltransferase activity"/>
    <property type="evidence" value="ECO:0007669"/>
    <property type="project" value="UniProtKB-UniRule"/>
</dbReference>
<dbReference type="GO" id="GO:0071555">
    <property type="term" value="P:cell wall organization"/>
    <property type="evidence" value="ECO:0007669"/>
    <property type="project" value="UniProtKB-KW"/>
</dbReference>
<dbReference type="GO" id="GO:0008299">
    <property type="term" value="P:isoprenoid biosynthetic process"/>
    <property type="evidence" value="ECO:0007669"/>
    <property type="project" value="InterPro"/>
</dbReference>
<dbReference type="GO" id="GO:1902012">
    <property type="term" value="P:poly(ribitol phosphate) teichoic acid biosynthetic process"/>
    <property type="evidence" value="ECO:0007669"/>
    <property type="project" value="UniProtKB-UniRule"/>
</dbReference>
<dbReference type="CDD" id="cd02516">
    <property type="entry name" value="CDP-ME_synthetase"/>
    <property type="match status" value="1"/>
</dbReference>
<dbReference type="FunFam" id="3.90.550.10:FF:000003">
    <property type="entry name" value="2-C-methyl-D-erythritol 4-phosphate cytidylyltransferase"/>
    <property type="match status" value="1"/>
</dbReference>
<dbReference type="Gene3D" id="3.90.550.10">
    <property type="entry name" value="Spore Coat Polysaccharide Biosynthesis Protein SpsA, Chain A"/>
    <property type="match status" value="1"/>
</dbReference>
<dbReference type="HAMAP" id="MF_02068">
    <property type="entry name" value="TarI"/>
    <property type="match status" value="1"/>
</dbReference>
<dbReference type="InterPro" id="IPR034683">
    <property type="entry name" value="IspD/TarI"/>
</dbReference>
<dbReference type="InterPro" id="IPR050088">
    <property type="entry name" value="IspD/TarI_cytidylyltransf_bact"/>
</dbReference>
<dbReference type="InterPro" id="IPR018294">
    <property type="entry name" value="ISPD_synthase_CS"/>
</dbReference>
<dbReference type="InterPro" id="IPR029044">
    <property type="entry name" value="Nucleotide-diphossugar_trans"/>
</dbReference>
<dbReference type="InterPro" id="IPR034709">
    <property type="entry name" value="TarI"/>
</dbReference>
<dbReference type="NCBIfam" id="NF001183">
    <property type="entry name" value="PRK00155.1-3"/>
    <property type="match status" value="1"/>
</dbReference>
<dbReference type="PANTHER" id="PTHR32125">
    <property type="entry name" value="2-C-METHYL-D-ERYTHRITOL 4-PHOSPHATE CYTIDYLYLTRANSFERASE, CHLOROPLASTIC"/>
    <property type="match status" value="1"/>
</dbReference>
<dbReference type="PANTHER" id="PTHR32125:SF8">
    <property type="entry name" value="RIBITOL-5-PHOSPHATE CYTIDYLYLTRANSFERASE"/>
    <property type="match status" value="1"/>
</dbReference>
<dbReference type="Pfam" id="PF01128">
    <property type="entry name" value="IspD"/>
    <property type="match status" value="1"/>
</dbReference>
<dbReference type="SUPFAM" id="SSF53448">
    <property type="entry name" value="Nucleotide-diphospho-sugar transferases"/>
    <property type="match status" value="1"/>
</dbReference>
<dbReference type="PROSITE" id="PS01295">
    <property type="entry name" value="ISPD"/>
    <property type="match status" value="1"/>
</dbReference>
<reference key="1">
    <citation type="journal article" date="2005" name="Proc. Natl. Acad. Sci. U.S.A.">
        <title>Whole genome sequence of Staphylococcus saprophyticus reveals the pathogenesis of uncomplicated urinary tract infection.</title>
        <authorList>
            <person name="Kuroda M."/>
            <person name="Yamashita A."/>
            <person name="Hirakawa H."/>
            <person name="Kumano M."/>
            <person name="Morikawa K."/>
            <person name="Higashide M."/>
            <person name="Maruyama A."/>
            <person name="Inose Y."/>
            <person name="Matoba K."/>
            <person name="Toh H."/>
            <person name="Kuhara S."/>
            <person name="Hattori M."/>
            <person name="Ohta T."/>
        </authorList>
    </citation>
    <scope>NUCLEOTIDE SEQUENCE [LARGE SCALE GENOMIC DNA]</scope>
    <source>
        <strain>ATCC 15305 / DSM 20229 / NCIMB 8711 / NCTC 7292 / S-41</strain>
    </source>
</reference>
<evidence type="ECO:0000255" key="1">
    <source>
        <dbReference type="HAMAP-Rule" id="MF_02068"/>
    </source>
</evidence>
<feature type="chain" id="PRO_0000237826" description="Ribitol-5-phosphate cytidylyltransferase">
    <location>
        <begin position="1"/>
        <end position="238"/>
    </location>
</feature>
<feature type="binding site" evidence="1">
    <location>
        <begin position="7"/>
        <end position="10"/>
    </location>
    <ligand>
        <name>CTP</name>
        <dbReference type="ChEBI" id="CHEBI:37563"/>
    </ligand>
</feature>
<feature type="binding site" evidence="1">
    <location>
        <begin position="81"/>
        <end position="87"/>
    </location>
    <ligand>
        <name>CTP</name>
        <dbReference type="ChEBI" id="CHEBI:37563"/>
    </ligand>
</feature>
<feature type="site" description="Transition state stabilizer" evidence="1">
    <location>
        <position position="14"/>
    </location>
</feature>
<feature type="site" description="Transition state stabilizer" evidence="1">
    <location>
        <position position="22"/>
    </location>
</feature>
<feature type="site" description="Positions ribitol 5-phosphate for the nucleophilic attack" evidence="1">
    <location>
        <position position="160"/>
    </location>
</feature>
<feature type="site" description="Positions ribitol 5-phosphate for the nucleophilic attack" evidence="1">
    <location>
        <position position="217"/>
    </location>
</feature>